<dbReference type="EMBL" id="CP001230">
    <property type="protein sequence ID" value="ACO03004.1"/>
    <property type="molecule type" value="Genomic_DNA"/>
</dbReference>
<dbReference type="RefSeq" id="WP_012675243.1">
    <property type="nucleotide sequence ID" value="NC_012440.1"/>
</dbReference>
<dbReference type="SMR" id="C0QPI1"/>
<dbReference type="STRING" id="123214.PERMA_0790"/>
<dbReference type="PaxDb" id="123214-PERMA_0790"/>
<dbReference type="KEGG" id="pmx:PERMA_0790"/>
<dbReference type="eggNOG" id="COG0445">
    <property type="taxonomic scope" value="Bacteria"/>
</dbReference>
<dbReference type="HOGENOM" id="CLU_007831_2_2_0"/>
<dbReference type="OrthoDB" id="9815560at2"/>
<dbReference type="Proteomes" id="UP000001366">
    <property type="component" value="Chromosome"/>
</dbReference>
<dbReference type="GO" id="GO:0005829">
    <property type="term" value="C:cytosol"/>
    <property type="evidence" value="ECO:0007669"/>
    <property type="project" value="TreeGrafter"/>
</dbReference>
<dbReference type="GO" id="GO:0050660">
    <property type="term" value="F:flavin adenine dinucleotide binding"/>
    <property type="evidence" value="ECO:0007669"/>
    <property type="project" value="UniProtKB-UniRule"/>
</dbReference>
<dbReference type="GO" id="GO:0030488">
    <property type="term" value="P:tRNA methylation"/>
    <property type="evidence" value="ECO:0007669"/>
    <property type="project" value="TreeGrafter"/>
</dbReference>
<dbReference type="GO" id="GO:0002098">
    <property type="term" value="P:tRNA wobble uridine modification"/>
    <property type="evidence" value="ECO:0007669"/>
    <property type="project" value="InterPro"/>
</dbReference>
<dbReference type="FunFam" id="1.10.150.570:FF:000001">
    <property type="entry name" value="tRNA uridine 5-carboxymethylaminomethyl modification enzyme MnmG"/>
    <property type="match status" value="1"/>
</dbReference>
<dbReference type="FunFam" id="3.50.50.60:FF:000002">
    <property type="entry name" value="tRNA uridine 5-carboxymethylaminomethyl modification enzyme MnmG"/>
    <property type="match status" value="1"/>
</dbReference>
<dbReference type="Gene3D" id="3.50.50.60">
    <property type="entry name" value="FAD/NAD(P)-binding domain"/>
    <property type="match status" value="2"/>
</dbReference>
<dbReference type="Gene3D" id="1.10.150.570">
    <property type="entry name" value="GidA associated domain, C-terminal subdomain"/>
    <property type="match status" value="1"/>
</dbReference>
<dbReference type="Gene3D" id="1.10.10.1800">
    <property type="entry name" value="tRNA uridine 5-carboxymethylaminomethyl modification enzyme MnmG/GidA"/>
    <property type="match status" value="1"/>
</dbReference>
<dbReference type="HAMAP" id="MF_00129">
    <property type="entry name" value="MnmG_GidA"/>
    <property type="match status" value="1"/>
</dbReference>
<dbReference type="InterPro" id="IPR036188">
    <property type="entry name" value="FAD/NAD-bd_sf"/>
</dbReference>
<dbReference type="InterPro" id="IPR049312">
    <property type="entry name" value="GIDA_C_N"/>
</dbReference>
<dbReference type="InterPro" id="IPR004416">
    <property type="entry name" value="MnmG"/>
</dbReference>
<dbReference type="InterPro" id="IPR002218">
    <property type="entry name" value="MnmG-rel"/>
</dbReference>
<dbReference type="InterPro" id="IPR020595">
    <property type="entry name" value="MnmG-rel_CS"/>
</dbReference>
<dbReference type="InterPro" id="IPR026904">
    <property type="entry name" value="MnmG_C"/>
</dbReference>
<dbReference type="InterPro" id="IPR047001">
    <property type="entry name" value="MnmG_C_subdom"/>
</dbReference>
<dbReference type="InterPro" id="IPR044920">
    <property type="entry name" value="MnmG_C_subdom_sf"/>
</dbReference>
<dbReference type="InterPro" id="IPR040131">
    <property type="entry name" value="MnmG_N"/>
</dbReference>
<dbReference type="NCBIfam" id="TIGR00136">
    <property type="entry name" value="mnmG_gidA"/>
    <property type="match status" value="1"/>
</dbReference>
<dbReference type="PANTHER" id="PTHR11806">
    <property type="entry name" value="GLUCOSE INHIBITED DIVISION PROTEIN A"/>
    <property type="match status" value="1"/>
</dbReference>
<dbReference type="PANTHER" id="PTHR11806:SF0">
    <property type="entry name" value="PROTEIN MTO1 HOMOLOG, MITOCHONDRIAL"/>
    <property type="match status" value="1"/>
</dbReference>
<dbReference type="Pfam" id="PF01134">
    <property type="entry name" value="GIDA"/>
    <property type="match status" value="1"/>
</dbReference>
<dbReference type="Pfam" id="PF21680">
    <property type="entry name" value="GIDA_C_1st"/>
    <property type="match status" value="1"/>
</dbReference>
<dbReference type="Pfam" id="PF13932">
    <property type="entry name" value="SAM_GIDA_C"/>
    <property type="match status" value="1"/>
</dbReference>
<dbReference type="SMART" id="SM01228">
    <property type="entry name" value="GIDA_assoc_3"/>
    <property type="match status" value="1"/>
</dbReference>
<dbReference type="SUPFAM" id="SSF51905">
    <property type="entry name" value="FAD/NAD(P)-binding domain"/>
    <property type="match status" value="1"/>
</dbReference>
<dbReference type="PROSITE" id="PS01280">
    <property type="entry name" value="GIDA_1"/>
    <property type="match status" value="1"/>
</dbReference>
<dbReference type="PROSITE" id="PS01281">
    <property type="entry name" value="GIDA_2"/>
    <property type="match status" value="1"/>
</dbReference>
<keyword id="KW-0963">Cytoplasm</keyword>
<keyword id="KW-0274">FAD</keyword>
<keyword id="KW-0285">Flavoprotein</keyword>
<keyword id="KW-0520">NAD</keyword>
<keyword id="KW-1185">Reference proteome</keyword>
<keyword id="KW-0819">tRNA processing</keyword>
<evidence type="ECO:0000255" key="1">
    <source>
        <dbReference type="HAMAP-Rule" id="MF_00129"/>
    </source>
</evidence>
<accession>C0QPI1</accession>
<proteinExistence type="inferred from homology"/>
<sequence>MVYDLEYDVVVIGGGHAGIEAALASAKLGVKTALITLDKEKVGLMPCNPAIGGIAKGIVVREIDAFGGEMGKAIDATGIQFKTLNTRKGPAVRSPRAQADKEEYRKYMVNKVLNTENLTVIEGEATDIYLKESSYEVEGVEVDRRLKIRAKSVVVTTGTFLDGVIHIGDKRIPAGRMDEKPSTKLPDFYRKLGFPLQRFKTGTPARLDKRTIDFSGLEEAPGDEPAPKFSFWTDPEHSYWFRKNQKEQIPCYITYTTPETHRIIRENLHRTALYGGAIKGIGPRYCPSIEDKIVKFENKERHTVWLEPETKNGISIYPNGLSTSLPEEVQWEMYRSIPGLENVVLLKPAYAIEYDIVPPTELYPTLETKRVKGLYHAGNFNGTTGYEEAAGQGLVAGINAALRALGKEPFYIRRDEAYIGVMIDDLTTKGVIEPYRLFTSRSEYRLHLRQDNPVLRLYRKAYNLGMLSYEQFKAVEEIEKEIGRWLDIYRNERRKIVSKGETRSVSAYDLLKRPDIDVNKLKEYGFETPESDYVAEEIDINVKYSGYFERERKMNEKMRYLENIKIPEDIDYSQIAGLTKEVVQKLTAAKPLTLGHAARLEGITPAAITAIMIHLQKLKRLKA</sequence>
<reference key="1">
    <citation type="journal article" date="2009" name="J. Bacteriol.">
        <title>Complete and draft genome sequences of six members of the Aquificales.</title>
        <authorList>
            <person name="Reysenbach A.-L."/>
            <person name="Hamamura N."/>
            <person name="Podar M."/>
            <person name="Griffiths E."/>
            <person name="Ferreira S."/>
            <person name="Hochstein R."/>
            <person name="Heidelberg J."/>
            <person name="Johnson J."/>
            <person name="Mead D."/>
            <person name="Pohorille A."/>
            <person name="Sarmiento M."/>
            <person name="Schweighofer K."/>
            <person name="Seshadri R."/>
            <person name="Voytek M.A."/>
        </authorList>
    </citation>
    <scope>NUCLEOTIDE SEQUENCE [LARGE SCALE GENOMIC DNA]</scope>
    <source>
        <strain>DSM 14350 / EX-H1</strain>
    </source>
</reference>
<protein>
    <recommendedName>
        <fullName evidence="1">tRNA uridine 5-carboxymethylaminomethyl modification enzyme MnmG</fullName>
    </recommendedName>
    <alternativeName>
        <fullName evidence="1">Glucose-inhibited division protein A</fullName>
    </alternativeName>
</protein>
<organism>
    <name type="scientific">Persephonella marina (strain DSM 14350 / EX-H1)</name>
    <dbReference type="NCBI Taxonomy" id="123214"/>
    <lineage>
        <taxon>Bacteria</taxon>
        <taxon>Pseudomonadati</taxon>
        <taxon>Aquificota</taxon>
        <taxon>Aquificia</taxon>
        <taxon>Aquificales</taxon>
        <taxon>Hydrogenothermaceae</taxon>
        <taxon>Persephonella</taxon>
    </lineage>
</organism>
<name>MNMG_PERMH</name>
<comment type="function">
    <text evidence="1">NAD-binding protein involved in the addition of a carboxymethylaminomethyl (cmnm) group at the wobble position (U34) of certain tRNAs, forming tRNA-cmnm(5)s(2)U34.</text>
</comment>
<comment type="cofactor">
    <cofactor evidence="1">
        <name>FAD</name>
        <dbReference type="ChEBI" id="CHEBI:57692"/>
    </cofactor>
</comment>
<comment type="subunit">
    <text evidence="1">Homodimer. Heterotetramer of two MnmE and two MnmG subunits.</text>
</comment>
<comment type="subcellular location">
    <subcellularLocation>
        <location evidence="1">Cytoplasm</location>
    </subcellularLocation>
</comment>
<comment type="similarity">
    <text evidence="1">Belongs to the MnmG family.</text>
</comment>
<feature type="chain" id="PRO_1000203165" description="tRNA uridine 5-carboxymethylaminomethyl modification enzyme MnmG">
    <location>
        <begin position="1"/>
        <end position="623"/>
    </location>
</feature>
<feature type="binding site" evidence="1">
    <location>
        <begin position="13"/>
        <end position="18"/>
    </location>
    <ligand>
        <name>FAD</name>
        <dbReference type="ChEBI" id="CHEBI:57692"/>
    </ligand>
</feature>
<feature type="binding site" evidence="1">
    <location>
        <begin position="282"/>
        <end position="296"/>
    </location>
    <ligand>
        <name>NAD(+)</name>
        <dbReference type="ChEBI" id="CHEBI:57540"/>
    </ligand>
</feature>
<gene>
    <name evidence="1" type="primary">mnmG</name>
    <name evidence="1" type="synonym">gidA</name>
    <name type="ordered locus">PERMA_0790</name>
</gene>